<organism>
    <name type="scientific">Mycobacterium avium (strain 104)</name>
    <dbReference type="NCBI Taxonomy" id="243243"/>
    <lineage>
        <taxon>Bacteria</taxon>
        <taxon>Bacillati</taxon>
        <taxon>Actinomycetota</taxon>
        <taxon>Actinomycetes</taxon>
        <taxon>Mycobacteriales</taxon>
        <taxon>Mycobacteriaceae</taxon>
        <taxon>Mycobacterium</taxon>
        <taxon>Mycobacterium avium complex (MAC)</taxon>
    </lineage>
</organism>
<proteinExistence type="inferred from homology"/>
<gene>
    <name evidence="1" type="primary">coaD</name>
    <name type="ordered locus">MAV_3810</name>
</gene>
<sequence>MTGAVCPGSFDPVTLGHVDVFERASAQFDEVVVAILTNPAKKGMFDLDERIAMIEESTTHLSNLRVEAGQGLVVDFVRSRGMTAIVKGLRTGTDFEYELQMAQMNKHIAGVDTFFVATAPRYSFVSSSLAKEVAMLGGDVSELLPEPVNRRLREKLSGRS</sequence>
<evidence type="ECO:0000255" key="1">
    <source>
        <dbReference type="HAMAP-Rule" id="MF_00151"/>
    </source>
</evidence>
<reference key="1">
    <citation type="submission" date="2006-10" db="EMBL/GenBank/DDBJ databases">
        <authorList>
            <person name="Fleischmann R.D."/>
            <person name="Dodson R.J."/>
            <person name="Haft D.H."/>
            <person name="Merkel J.S."/>
            <person name="Nelson W.C."/>
            <person name="Fraser C.M."/>
        </authorList>
    </citation>
    <scope>NUCLEOTIDE SEQUENCE [LARGE SCALE GENOMIC DNA]</scope>
    <source>
        <strain>104</strain>
    </source>
</reference>
<comment type="function">
    <text evidence="1">Reversibly transfers an adenylyl group from ATP to 4'-phosphopantetheine, yielding dephospho-CoA (dPCoA) and pyrophosphate.</text>
</comment>
<comment type="catalytic activity">
    <reaction evidence="1">
        <text>(R)-4'-phosphopantetheine + ATP + H(+) = 3'-dephospho-CoA + diphosphate</text>
        <dbReference type="Rhea" id="RHEA:19801"/>
        <dbReference type="ChEBI" id="CHEBI:15378"/>
        <dbReference type="ChEBI" id="CHEBI:30616"/>
        <dbReference type="ChEBI" id="CHEBI:33019"/>
        <dbReference type="ChEBI" id="CHEBI:57328"/>
        <dbReference type="ChEBI" id="CHEBI:61723"/>
        <dbReference type="EC" id="2.7.7.3"/>
    </reaction>
</comment>
<comment type="cofactor">
    <cofactor evidence="1">
        <name>Mg(2+)</name>
        <dbReference type="ChEBI" id="CHEBI:18420"/>
    </cofactor>
</comment>
<comment type="pathway">
    <text evidence="1">Cofactor biosynthesis; coenzyme A biosynthesis; CoA from (R)-pantothenate: step 4/5.</text>
</comment>
<comment type="subunit">
    <text evidence="1">Homohexamer.</text>
</comment>
<comment type="subcellular location">
    <subcellularLocation>
        <location evidence="1">Cytoplasm</location>
    </subcellularLocation>
</comment>
<comment type="similarity">
    <text evidence="1">Belongs to the bacterial CoaD family.</text>
</comment>
<accession>A0QJ93</accession>
<keyword id="KW-0067">ATP-binding</keyword>
<keyword id="KW-0173">Coenzyme A biosynthesis</keyword>
<keyword id="KW-0963">Cytoplasm</keyword>
<keyword id="KW-0460">Magnesium</keyword>
<keyword id="KW-0547">Nucleotide-binding</keyword>
<keyword id="KW-0548">Nucleotidyltransferase</keyword>
<keyword id="KW-0808">Transferase</keyword>
<dbReference type="EC" id="2.7.7.3" evidence="1"/>
<dbReference type="EMBL" id="CP000479">
    <property type="protein sequence ID" value="ABK65630.1"/>
    <property type="molecule type" value="Genomic_DNA"/>
</dbReference>
<dbReference type="RefSeq" id="WP_003875043.1">
    <property type="nucleotide sequence ID" value="NC_008595.1"/>
</dbReference>
<dbReference type="SMR" id="A0QJ93"/>
<dbReference type="GeneID" id="75271211"/>
<dbReference type="KEGG" id="mav:MAV_3810"/>
<dbReference type="HOGENOM" id="CLU_100149_1_0_11"/>
<dbReference type="UniPathway" id="UPA00241">
    <property type="reaction ID" value="UER00355"/>
</dbReference>
<dbReference type="Proteomes" id="UP000001574">
    <property type="component" value="Chromosome"/>
</dbReference>
<dbReference type="GO" id="GO:0005737">
    <property type="term" value="C:cytoplasm"/>
    <property type="evidence" value="ECO:0007669"/>
    <property type="project" value="UniProtKB-SubCell"/>
</dbReference>
<dbReference type="GO" id="GO:0005524">
    <property type="term" value="F:ATP binding"/>
    <property type="evidence" value="ECO:0007669"/>
    <property type="project" value="UniProtKB-KW"/>
</dbReference>
<dbReference type="GO" id="GO:0004595">
    <property type="term" value="F:pantetheine-phosphate adenylyltransferase activity"/>
    <property type="evidence" value="ECO:0007669"/>
    <property type="project" value="UniProtKB-UniRule"/>
</dbReference>
<dbReference type="GO" id="GO:0015937">
    <property type="term" value="P:coenzyme A biosynthetic process"/>
    <property type="evidence" value="ECO:0007669"/>
    <property type="project" value="UniProtKB-UniRule"/>
</dbReference>
<dbReference type="CDD" id="cd02163">
    <property type="entry name" value="PPAT"/>
    <property type="match status" value="1"/>
</dbReference>
<dbReference type="FunFam" id="3.40.50.620:FF:000012">
    <property type="entry name" value="Phosphopantetheine adenylyltransferase"/>
    <property type="match status" value="1"/>
</dbReference>
<dbReference type="Gene3D" id="3.40.50.620">
    <property type="entry name" value="HUPs"/>
    <property type="match status" value="1"/>
</dbReference>
<dbReference type="HAMAP" id="MF_00151">
    <property type="entry name" value="PPAT_bact"/>
    <property type="match status" value="1"/>
</dbReference>
<dbReference type="InterPro" id="IPR004821">
    <property type="entry name" value="Cyt_trans-like"/>
</dbReference>
<dbReference type="InterPro" id="IPR001980">
    <property type="entry name" value="PPAT"/>
</dbReference>
<dbReference type="InterPro" id="IPR014729">
    <property type="entry name" value="Rossmann-like_a/b/a_fold"/>
</dbReference>
<dbReference type="NCBIfam" id="TIGR01510">
    <property type="entry name" value="coaD_prev_kdtB"/>
    <property type="match status" value="1"/>
</dbReference>
<dbReference type="NCBIfam" id="TIGR00125">
    <property type="entry name" value="cyt_tran_rel"/>
    <property type="match status" value="1"/>
</dbReference>
<dbReference type="PANTHER" id="PTHR21342">
    <property type="entry name" value="PHOSPHOPANTETHEINE ADENYLYLTRANSFERASE"/>
    <property type="match status" value="1"/>
</dbReference>
<dbReference type="PANTHER" id="PTHR21342:SF1">
    <property type="entry name" value="PHOSPHOPANTETHEINE ADENYLYLTRANSFERASE"/>
    <property type="match status" value="1"/>
</dbReference>
<dbReference type="Pfam" id="PF01467">
    <property type="entry name" value="CTP_transf_like"/>
    <property type="match status" value="1"/>
</dbReference>
<dbReference type="PRINTS" id="PR01020">
    <property type="entry name" value="LPSBIOSNTHSS"/>
</dbReference>
<dbReference type="SUPFAM" id="SSF52374">
    <property type="entry name" value="Nucleotidylyl transferase"/>
    <property type="match status" value="1"/>
</dbReference>
<feature type="chain" id="PRO_1000011177" description="Phosphopantetheine adenylyltransferase">
    <location>
        <begin position="1"/>
        <end position="160"/>
    </location>
</feature>
<feature type="binding site" evidence="1">
    <location>
        <begin position="9"/>
        <end position="10"/>
    </location>
    <ligand>
        <name>ATP</name>
        <dbReference type="ChEBI" id="CHEBI:30616"/>
    </ligand>
</feature>
<feature type="binding site" evidence="1">
    <location>
        <position position="9"/>
    </location>
    <ligand>
        <name>substrate</name>
    </ligand>
</feature>
<feature type="binding site" evidence="1">
    <location>
        <position position="17"/>
    </location>
    <ligand>
        <name>ATP</name>
        <dbReference type="ChEBI" id="CHEBI:30616"/>
    </ligand>
</feature>
<feature type="binding site" evidence="1">
    <location>
        <position position="41"/>
    </location>
    <ligand>
        <name>substrate</name>
    </ligand>
</feature>
<feature type="binding site" evidence="1">
    <location>
        <position position="73"/>
    </location>
    <ligand>
        <name>substrate</name>
    </ligand>
</feature>
<feature type="binding site" evidence="1">
    <location>
        <position position="87"/>
    </location>
    <ligand>
        <name>substrate</name>
    </ligand>
</feature>
<feature type="binding site" evidence="1">
    <location>
        <begin position="88"/>
        <end position="90"/>
    </location>
    <ligand>
        <name>ATP</name>
        <dbReference type="ChEBI" id="CHEBI:30616"/>
    </ligand>
</feature>
<feature type="binding site" evidence="1">
    <location>
        <position position="98"/>
    </location>
    <ligand>
        <name>ATP</name>
        <dbReference type="ChEBI" id="CHEBI:30616"/>
    </ligand>
</feature>
<feature type="binding site" evidence="1">
    <location>
        <begin position="122"/>
        <end position="128"/>
    </location>
    <ligand>
        <name>ATP</name>
        <dbReference type="ChEBI" id="CHEBI:30616"/>
    </ligand>
</feature>
<feature type="site" description="Transition state stabilizer" evidence="1">
    <location>
        <position position="17"/>
    </location>
</feature>
<protein>
    <recommendedName>
        <fullName evidence="1">Phosphopantetheine adenylyltransferase</fullName>
        <ecNumber evidence="1">2.7.7.3</ecNumber>
    </recommendedName>
    <alternativeName>
        <fullName evidence="1">Dephospho-CoA pyrophosphorylase</fullName>
    </alternativeName>
    <alternativeName>
        <fullName evidence="1">Pantetheine-phosphate adenylyltransferase</fullName>
        <shortName evidence="1">PPAT</shortName>
    </alternativeName>
</protein>
<name>COAD_MYCA1</name>